<evidence type="ECO:0000250" key="1">
    <source>
        <dbReference type="UniProtKB" id="Q15465"/>
    </source>
</evidence>
<evidence type="ECO:0000250" key="2">
    <source>
        <dbReference type="UniProtKB" id="Q62226"/>
    </source>
</evidence>
<evidence type="ECO:0000255" key="3"/>
<evidence type="ECO:0000269" key="4">
    <source>
    </source>
</evidence>
<evidence type="ECO:0000269" key="5">
    <source>
    </source>
</evidence>
<evidence type="ECO:0000269" key="6">
    <source>
    </source>
</evidence>
<evidence type="ECO:0000269" key="7">
    <source>
    </source>
</evidence>
<evidence type="ECO:0000269" key="8">
    <source>
    </source>
</evidence>
<evidence type="ECO:0000269" key="9">
    <source>
    </source>
</evidence>
<evidence type="ECO:0000269" key="10">
    <source>
    </source>
</evidence>
<evidence type="ECO:0000269" key="11">
    <source>
    </source>
</evidence>
<evidence type="ECO:0000269" key="12">
    <source>
    </source>
</evidence>
<evidence type="ECO:0000269" key="13">
    <source>
    </source>
</evidence>
<evidence type="ECO:0000269" key="14">
    <source>
    </source>
</evidence>
<evidence type="ECO:0000269" key="15">
    <source>
    </source>
</evidence>
<evidence type="ECO:0000269" key="16">
    <source>
    </source>
</evidence>
<evidence type="ECO:0000269" key="17">
    <source>
    </source>
</evidence>
<evidence type="ECO:0000305" key="18"/>
<evidence type="ECO:0000312" key="19">
    <source>
        <dbReference type="FlyBase" id="FBgn0004644"/>
    </source>
</evidence>
<evidence type="ECO:0007829" key="20">
    <source>
        <dbReference type="PDB" id="2IBG"/>
    </source>
</evidence>
<evidence type="ECO:0007829" key="21">
    <source>
        <dbReference type="PDB" id="6TYY"/>
    </source>
</evidence>
<feature type="signal peptide" evidence="3">
    <location>
        <begin position="1"/>
        <end status="unknown"/>
    </location>
</feature>
<feature type="propeptide" id="PRO_0000383048" evidence="3">
    <location>
        <begin status="unknown"/>
        <end position="84"/>
    </location>
</feature>
<feature type="chain" id="PRO_0000013202" description="Protein hedgehog">
    <location>
        <begin position="85"/>
        <end position="471"/>
    </location>
</feature>
<feature type="chain" id="PRO_0000013203" description="Protein hedgehog N-product">
    <location>
        <begin position="85"/>
        <end position="257"/>
    </location>
</feature>
<feature type="binding site" evidence="1">
    <location>
        <position position="149"/>
    </location>
    <ligand>
        <name>Ca(2+)</name>
        <dbReference type="ChEBI" id="CHEBI:29108"/>
        <label>1</label>
    </ligand>
</feature>
<feature type="binding site" evidence="1">
    <location>
        <position position="150"/>
    </location>
    <ligand>
        <name>Ca(2+)</name>
        <dbReference type="ChEBI" id="CHEBI:29108"/>
        <label>1</label>
    </ligand>
</feature>
<feature type="binding site" evidence="1">
    <location>
        <position position="150"/>
    </location>
    <ligand>
        <name>Ca(2+)</name>
        <dbReference type="ChEBI" id="CHEBI:29108"/>
        <label>2</label>
    </ligand>
</feature>
<feature type="binding site" evidence="1">
    <location>
        <position position="155"/>
    </location>
    <ligand>
        <name>Ca(2+)</name>
        <dbReference type="ChEBI" id="CHEBI:29108"/>
        <label>1</label>
    </ligand>
</feature>
<feature type="binding site" evidence="1">
    <location>
        <position position="185"/>
    </location>
    <ligand>
        <name>Ca(2+)</name>
        <dbReference type="ChEBI" id="CHEBI:29108"/>
        <label>1</label>
    </ligand>
</feature>
<feature type="binding site" evidence="1">
    <location>
        <position position="186"/>
    </location>
    <ligand>
        <name>Ca(2+)</name>
        <dbReference type="ChEBI" id="CHEBI:29108"/>
        <label>1</label>
    </ligand>
</feature>
<feature type="binding site" evidence="1">
    <location>
        <position position="186"/>
    </location>
    <ligand>
        <name>Ca(2+)</name>
        <dbReference type="ChEBI" id="CHEBI:29108"/>
        <label>2</label>
    </ligand>
</feature>
<feature type="binding site" evidence="1">
    <location>
        <position position="189"/>
    </location>
    <ligand>
        <name>Ca(2+)</name>
        <dbReference type="ChEBI" id="CHEBI:29108"/>
        <label>2</label>
    </ligand>
</feature>
<feature type="binding site" evidence="1">
    <location>
        <position position="191"/>
    </location>
    <ligand>
        <name>Ca(2+)</name>
        <dbReference type="ChEBI" id="CHEBI:29108"/>
        <label>2</label>
    </ligand>
</feature>
<feature type="site" description="Cleavage; by autolysis" evidence="15">
    <location>
        <begin position="257"/>
        <end position="258"/>
    </location>
</feature>
<feature type="site" description="Involved in cholesterol transfer" evidence="17">
    <location>
        <position position="303"/>
    </location>
</feature>
<feature type="site" description="Involved in auto-cleavage" evidence="17">
    <location>
        <position position="326"/>
    </location>
</feature>
<feature type="site" description="Essential for auto-cleavage" evidence="15 17">
    <location>
        <position position="329"/>
    </location>
</feature>
<feature type="lipid moiety-binding region" description="N-palmitoyl cysteine" evidence="5">
    <location>
        <position position="85"/>
    </location>
</feature>
<feature type="lipid moiety-binding region" description="Cholesterol glycine ester" evidence="5">
    <location>
        <position position="257"/>
    </location>
</feature>
<feature type="splice variant" id="VSP_002065" description="In isoform Short." evidence="18">
    <original>RCKEKLNVLAYSVMNEWPGIRLLVTESWDEDY</original>
    <variation>VRKTLKHRKLVTKFVIHHWESFAYRNHCDKVT</variation>
    <location>
        <begin position="161"/>
        <end position="192"/>
    </location>
</feature>
<feature type="splice variant" id="VSP_002066" description="In isoform Short." evidence="18">
    <location>
        <begin position="193"/>
        <end position="471"/>
    </location>
</feature>
<feature type="mutagenesis site" description="N-product is made but fails to undergo palmitoylation." evidence="4 5">
    <original>C</original>
    <variation>S</variation>
    <location>
        <position position="85"/>
    </location>
</feature>
<feature type="mutagenesis site" description="No cholesterol transfer." evidence="17">
    <original>D</original>
    <variation>A</variation>
    <location>
        <position position="303"/>
    </location>
</feature>
<feature type="mutagenesis site" description="Greatly reduced autoprocessing activity." evidence="17">
    <original>T</original>
    <variation>A</variation>
    <location>
        <position position="326"/>
    </location>
</feature>
<feature type="mutagenesis site" description="No autoprocessing activity." evidence="17">
    <original>H</original>
    <variation>A</variation>
    <location>
        <position position="329"/>
    </location>
</feature>
<feature type="sequence conflict" description="In Ref. 1; AAA28604." evidence="18" ref="1">
    <original>R</original>
    <variation>G</variation>
    <location>
        <position position="156"/>
    </location>
</feature>
<feature type="sequence conflict" description="In Ref. 1; AAA28604." evidence="18" ref="1">
    <original>D</original>
    <variation>H</variation>
    <location>
        <position position="347"/>
    </location>
</feature>
<feature type="sequence conflict" description="In Ref. 1; AAA28604." evidence="18" ref="1">
    <original>V</original>
    <variation>L</variation>
    <location>
        <position position="373"/>
    </location>
</feature>
<feature type="sequence conflict" description="In Ref. 3; Z11840." evidence="18" ref="3">
    <original>Q</original>
    <variation>P</variation>
    <location>
        <position position="407"/>
    </location>
</feature>
<feature type="strand" evidence="20">
    <location>
        <begin position="107"/>
        <end position="111"/>
    </location>
</feature>
<feature type="turn" evidence="20">
    <location>
        <begin position="116"/>
        <end position="119"/>
    </location>
</feature>
<feature type="helix" evidence="20">
    <location>
        <begin position="131"/>
        <end position="135"/>
    </location>
</feature>
<feature type="strand" evidence="20">
    <location>
        <begin position="144"/>
        <end position="146"/>
    </location>
</feature>
<feature type="helix" evidence="20">
    <location>
        <begin position="160"/>
        <end position="176"/>
    </location>
</feature>
<feature type="strand" evidence="20">
    <location>
        <begin position="182"/>
        <end position="188"/>
    </location>
</feature>
<feature type="helix" evidence="20">
    <location>
        <begin position="199"/>
        <end position="202"/>
    </location>
</feature>
<feature type="strand" evidence="20">
    <location>
        <begin position="205"/>
        <end position="210"/>
    </location>
</feature>
<feature type="helix" evidence="20">
    <location>
        <begin position="215"/>
        <end position="217"/>
    </location>
</feature>
<feature type="helix" evidence="20">
    <location>
        <begin position="218"/>
        <end position="228"/>
    </location>
</feature>
<feature type="strand" evidence="20">
    <location>
        <begin position="231"/>
        <end position="234"/>
    </location>
</feature>
<feature type="strand" evidence="20">
    <location>
        <begin position="241"/>
        <end position="244"/>
    </location>
</feature>
<feature type="strand" evidence="21">
    <location>
        <begin position="264"/>
        <end position="267"/>
    </location>
</feature>
<feature type="strand" evidence="21">
    <location>
        <begin position="272"/>
        <end position="274"/>
    </location>
</feature>
<feature type="turn" evidence="21">
    <location>
        <begin position="275"/>
        <end position="277"/>
    </location>
</feature>
<feature type="strand" evidence="21">
    <location>
        <begin position="283"/>
        <end position="287"/>
    </location>
</feature>
<feature type="strand" evidence="21">
    <location>
        <begin position="293"/>
        <end position="317"/>
    </location>
</feature>
<feature type="strand" evidence="21">
    <location>
        <begin position="322"/>
        <end position="325"/>
    </location>
</feature>
<feature type="strand" evidence="21">
    <location>
        <begin position="329"/>
        <end position="335"/>
    </location>
</feature>
<feature type="turn" evidence="21">
    <location>
        <begin position="336"/>
        <end position="339"/>
    </location>
</feature>
<feature type="strand" evidence="21">
    <location>
        <begin position="340"/>
        <end position="345"/>
    </location>
</feature>
<feature type="helix" evidence="21">
    <location>
        <begin position="346"/>
        <end position="348"/>
    </location>
</feature>
<feature type="strand" evidence="21">
    <location>
        <begin position="354"/>
        <end position="358"/>
    </location>
</feature>
<feature type="turn" evidence="21">
    <location>
        <begin position="360"/>
        <end position="362"/>
    </location>
</feature>
<feature type="strand" evidence="21">
    <location>
        <begin position="365"/>
        <end position="393"/>
    </location>
</feature>
<feature type="strand" evidence="21">
    <location>
        <begin position="396"/>
        <end position="402"/>
    </location>
</feature>
<protein>
    <recommendedName>
        <fullName evidence="18">Protein hedgehog</fullName>
        <ecNumber evidence="2">3.1.-.-</ecNumber>
    </recommendedName>
    <component>
        <recommendedName>
            <fullName>Protein hedgehog N-product</fullName>
            <shortName>Hh-Np</shortName>
            <shortName>N-Hh</shortName>
        </recommendedName>
    </component>
</protein>
<name>HH_DROME</name>
<accession>Q02936</accession>
<accession>A4V396</accession>
<accession>Q9VCQ4</accession>
<gene>
    <name evidence="19" type="primary">hh</name>
    <name evidence="19" type="ORF">CG4637</name>
</gene>
<proteinExistence type="evidence at protein level"/>
<sequence>MDNHSSVPWASAASVTCLSLDAKCHSSSSSSSSKSAASSISAIPQEETQTMRHIAHTQRCLSRLTSLVALLLIVLPMVFSPAHSCGPGRGLGRHRARNLYPLVLKQTIPNLSEYTNSASGPLEGVIRRDSPKFKDLVPNYNRDILFRDEEGTGADRLMSKRCKEKLNVLAYSVMNEWPGIRLLVTESWDEDYHHGQESLHYEGRAVTIATSDRDQSKYGMLARLAVEAGFDWVSYVSRRHIYCSVKSDSSISSHVHGCFTPESTALLESGVRKPLGELSIGDRVLSMTANGQAVYSEVILFMDRNLEQMQNFVQLHTDGGAVLTVTPAHLVSVWQPESQKLTFVFADRIEEKNQVLVRDVETGELRPQRVVKVGSVRSKGVVAPLTREGTIVVNSVAASCYAVINSQSLAHWGLAPMRLLSTLEAWLPAKEQLHSSPKVVSSAQQQNGIHWYANALYKVKDYVLPQSWRHD</sequence>
<organism>
    <name type="scientific">Drosophila melanogaster</name>
    <name type="common">Fruit fly</name>
    <dbReference type="NCBI Taxonomy" id="7227"/>
    <lineage>
        <taxon>Eukaryota</taxon>
        <taxon>Metazoa</taxon>
        <taxon>Ecdysozoa</taxon>
        <taxon>Arthropoda</taxon>
        <taxon>Hexapoda</taxon>
        <taxon>Insecta</taxon>
        <taxon>Pterygota</taxon>
        <taxon>Neoptera</taxon>
        <taxon>Endopterygota</taxon>
        <taxon>Diptera</taxon>
        <taxon>Brachycera</taxon>
        <taxon>Muscomorpha</taxon>
        <taxon>Ephydroidea</taxon>
        <taxon>Drosophilidae</taxon>
        <taxon>Drosophila</taxon>
        <taxon>Sophophora</taxon>
    </lineage>
</organism>
<dbReference type="EC" id="3.1.-.-" evidence="2"/>
<dbReference type="EMBL" id="L05404">
    <property type="protein sequence ID" value="AAA28604.1"/>
    <property type="status" value="ALT_FRAME"/>
    <property type="molecule type" value="mRNA"/>
</dbReference>
<dbReference type="EMBL" id="L05405">
    <property type="status" value="NOT_ANNOTATED_CDS"/>
    <property type="molecule type" value="Genomic_DNA"/>
</dbReference>
<dbReference type="EMBL" id="L02793">
    <property type="protein sequence ID" value="AAA16458.1"/>
    <property type="molecule type" value="Unassigned_DNA"/>
</dbReference>
<dbReference type="EMBL" id="Z11840">
    <property type="status" value="NOT_ANNOTATED_CDS"/>
    <property type="molecule type" value="Genomic_DNA"/>
</dbReference>
<dbReference type="EMBL" id="S66384">
    <property type="protein sequence ID" value="AAB28646.1"/>
    <property type="molecule type" value="mRNA"/>
</dbReference>
<dbReference type="EMBL" id="AE014297">
    <property type="protein sequence ID" value="AAF56102.1"/>
    <property type="molecule type" value="Genomic_DNA"/>
</dbReference>
<dbReference type="EMBL" id="AE014297">
    <property type="protein sequence ID" value="ABC66186.1"/>
    <property type="molecule type" value="Genomic_DNA"/>
</dbReference>
<dbReference type="PIR" id="A46400">
    <property type="entry name" value="A46400"/>
</dbReference>
<dbReference type="RefSeq" id="NP_001034065.1">
    <molecule id="Q02936-1"/>
    <property type="nucleotide sequence ID" value="NM_001038976.1"/>
</dbReference>
<dbReference type="PDB" id="1AT0">
    <property type="method" value="X-ray"/>
    <property type="resolution" value="1.90 A"/>
    <property type="chains" value="A=258-402"/>
</dbReference>
<dbReference type="PDB" id="2IBG">
    <property type="method" value="X-ray"/>
    <property type="resolution" value="2.20 A"/>
    <property type="chains" value="E/F/G/H=99-248"/>
</dbReference>
<dbReference type="PDB" id="6TD6">
    <property type="method" value="EM"/>
    <property type="resolution" value="4.76 A"/>
    <property type="chains" value="B=1-471"/>
</dbReference>
<dbReference type="PDB" id="6TYY">
    <property type="method" value="X-ray"/>
    <property type="resolution" value="1.36 A"/>
    <property type="chains" value="A=258-403"/>
</dbReference>
<dbReference type="PDBsum" id="1AT0"/>
<dbReference type="PDBsum" id="2IBG"/>
<dbReference type="PDBsum" id="6TD6"/>
<dbReference type="PDBsum" id="6TYY"/>
<dbReference type="BMRB" id="Q02936"/>
<dbReference type="EMDB" id="EMD-10464"/>
<dbReference type="SMR" id="Q02936"/>
<dbReference type="BioGRID" id="67682">
    <property type="interactions" value="79"/>
</dbReference>
<dbReference type="DIP" id="DIP-51313N"/>
<dbReference type="FunCoup" id="Q02936">
    <property type="interactions" value="44"/>
</dbReference>
<dbReference type="IntAct" id="Q02936">
    <property type="interactions" value="3"/>
</dbReference>
<dbReference type="STRING" id="7227.FBpp0099945"/>
<dbReference type="MEROPS" id="C46.001"/>
<dbReference type="GlyGen" id="Q02936">
    <property type="glycosylation" value="1 site"/>
</dbReference>
<dbReference type="PaxDb" id="7227-FBpp0099945"/>
<dbReference type="EnsemblMetazoa" id="FBtr0100506">
    <molecule id="Q02936-1"/>
    <property type="protein sequence ID" value="FBpp0099945"/>
    <property type="gene ID" value="FBgn0004644"/>
</dbReference>
<dbReference type="GeneID" id="42737"/>
<dbReference type="KEGG" id="dme:Dmel_CG4637"/>
<dbReference type="UCSC" id="CG4637-RA">
    <molecule id="Q02936-1"/>
    <property type="organism name" value="d. melanogaster"/>
</dbReference>
<dbReference type="UCSC" id="CG4637-RB">
    <property type="organism name" value="d. melanogaster"/>
</dbReference>
<dbReference type="AGR" id="FB:FBgn0004644"/>
<dbReference type="CTD" id="42737"/>
<dbReference type="FlyBase" id="FBgn0004644">
    <property type="gene designation" value="hh"/>
</dbReference>
<dbReference type="VEuPathDB" id="VectorBase:FBgn0004644"/>
<dbReference type="eggNOG" id="KOG3638">
    <property type="taxonomic scope" value="Eukaryota"/>
</dbReference>
<dbReference type="GeneTree" id="ENSGT00940000161132"/>
<dbReference type="HOGENOM" id="CLU_034686_0_0_1"/>
<dbReference type="InParanoid" id="Q02936"/>
<dbReference type="OMA" id="APAVRGC"/>
<dbReference type="OrthoDB" id="5212at2759"/>
<dbReference type="PhylomeDB" id="Q02936"/>
<dbReference type="Reactome" id="R-DME-209338">
    <property type="pathway name" value="Assembly of the 'signalling complexes'"/>
</dbReference>
<dbReference type="Reactome" id="R-DME-209471">
    <property type="pathway name" value="Formation and transport of the N-HH ligand"/>
</dbReference>
<dbReference type="Reactome" id="R-DME-5358346">
    <property type="pathway name" value="Hedgehog ligand biogenesis"/>
</dbReference>
<dbReference type="Reactome" id="R-DME-5362798">
    <property type="pathway name" value="Release of Hh-Np from the secreting cell"/>
</dbReference>
<dbReference type="Reactome" id="R-DME-5632681">
    <property type="pathway name" value="Ligand-receptor interactions"/>
</dbReference>
<dbReference type="SignaLink" id="Q02936"/>
<dbReference type="BioGRID-ORCS" id="42737">
    <property type="hits" value="0 hits in 3 CRISPR screens"/>
</dbReference>
<dbReference type="EvolutionaryTrace" id="Q02936"/>
<dbReference type="GenomeRNAi" id="42737"/>
<dbReference type="PRO" id="PR:Q02936"/>
<dbReference type="Proteomes" id="UP000000803">
    <property type="component" value="Chromosome 3R"/>
</dbReference>
<dbReference type="Bgee" id="FBgn0004644">
    <property type="expression patterns" value="Expressed in head cyst cell (Drosophila) in testis and 73 other cell types or tissues"/>
</dbReference>
<dbReference type="GO" id="GO:0031410">
    <property type="term" value="C:cytoplasmic vesicle"/>
    <property type="evidence" value="ECO:0000314"/>
    <property type="project" value="FlyBase"/>
</dbReference>
<dbReference type="GO" id="GO:0005829">
    <property type="term" value="C:cytosol"/>
    <property type="evidence" value="ECO:0000304"/>
    <property type="project" value="Reactome"/>
</dbReference>
<dbReference type="GO" id="GO:0030139">
    <property type="term" value="C:endocytic vesicle"/>
    <property type="evidence" value="ECO:0000314"/>
    <property type="project" value="FlyBase"/>
</dbReference>
<dbReference type="GO" id="GO:0005768">
    <property type="term" value="C:endosome"/>
    <property type="evidence" value="ECO:0000314"/>
    <property type="project" value="FlyBase"/>
</dbReference>
<dbReference type="GO" id="GO:0005576">
    <property type="term" value="C:extracellular region"/>
    <property type="evidence" value="ECO:0000314"/>
    <property type="project" value="FlyBase"/>
</dbReference>
<dbReference type="GO" id="GO:0005615">
    <property type="term" value="C:extracellular space"/>
    <property type="evidence" value="ECO:0000314"/>
    <property type="project" value="FlyBase"/>
</dbReference>
<dbReference type="GO" id="GO:0005634">
    <property type="term" value="C:nucleus"/>
    <property type="evidence" value="ECO:0007669"/>
    <property type="project" value="UniProtKB-SubCell"/>
</dbReference>
<dbReference type="GO" id="GO:0005886">
    <property type="term" value="C:plasma membrane"/>
    <property type="evidence" value="ECO:0000314"/>
    <property type="project" value="FlyBase"/>
</dbReference>
<dbReference type="GO" id="GO:0005509">
    <property type="term" value="F:calcium ion binding"/>
    <property type="evidence" value="ECO:0000318"/>
    <property type="project" value="GO_Central"/>
</dbReference>
<dbReference type="GO" id="GO:0140853">
    <property type="term" value="F:cholesterol-protein transferase activity"/>
    <property type="evidence" value="ECO:0000250"/>
    <property type="project" value="UniProtKB"/>
</dbReference>
<dbReference type="GO" id="GO:0016015">
    <property type="term" value="F:morphogen activity"/>
    <property type="evidence" value="ECO:0000314"/>
    <property type="project" value="FlyBase"/>
</dbReference>
<dbReference type="GO" id="GO:0005113">
    <property type="term" value="F:patched binding"/>
    <property type="evidence" value="ECO:0000353"/>
    <property type="project" value="FlyBase"/>
</dbReference>
<dbReference type="GO" id="GO:0008233">
    <property type="term" value="F:peptidase activity"/>
    <property type="evidence" value="ECO:0000250"/>
    <property type="project" value="UniProtKB"/>
</dbReference>
<dbReference type="GO" id="GO:0007487">
    <property type="term" value="P:analia development"/>
    <property type="evidence" value="ECO:0000304"/>
    <property type="project" value="FlyBase"/>
</dbReference>
<dbReference type="GO" id="GO:0035288">
    <property type="term" value="P:anterior head segmentation"/>
    <property type="evidence" value="ECO:0000304"/>
    <property type="project" value="FlyBase"/>
</dbReference>
<dbReference type="GO" id="GO:0048099">
    <property type="term" value="P:anterior/posterior lineage restriction, imaginal disc"/>
    <property type="evidence" value="ECO:0000304"/>
    <property type="project" value="FlyBase"/>
</dbReference>
<dbReference type="GO" id="GO:0001746">
    <property type="term" value="P:Bolwig's organ morphogenesis"/>
    <property type="evidence" value="ECO:0000315"/>
    <property type="project" value="FlyBase"/>
</dbReference>
<dbReference type="GO" id="GO:0001708">
    <property type="term" value="P:cell fate specification"/>
    <property type="evidence" value="ECO:0000318"/>
    <property type="project" value="GO_Central"/>
</dbReference>
<dbReference type="GO" id="GO:0007267">
    <property type="term" value="P:cell-cell signaling"/>
    <property type="evidence" value="ECO:0007669"/>
    <property type="project" value="InterPro"/>
</dbReference>
<dbReference type="GO" id="GO:0007386">
    <property type="term" value="P:compartment pattern specification"/>
    <property type="evidence" value="ECO:0000304"/>
    <property type="project" value="FlyBase"/>
</dbReference>
<dbReference type="GO" id="GO:0001745">
    <property type="term" value="P:compound eye morphogenesis"/>
    <property type="evidence" value="ECO:0000315"/>
    <property type="project" value="FlyBase"/>
</dbReference>
<dbReference type="GO" id="GO:0001751">
    <property type="term" value="P:compound eye photoreceptor cell differentiation"/>
    <property type="evidence" value="ECO:0000304"/>
    <property type="project" value="FlyBase"/>
</dbReference>
<dbReference type="GO" id="GO:0035231">
    <property type="term" value="P:cytoneme assembly"/>
    <property type="evidence" value="ECO:0000315"/>
    <property type="project" value="FlyBase"/>
</dbReference>
<dbReference type="GO" id="GO:0048066">
    <property type="term" value="P:developmental pigmentation"/>
    <property type="evidence" value="ECO:0000304"/>
    <property type="project" value="FlyBase"/>
</dbReference>
<dbReference type="GO" id="GO:0009880">
    <property type="term" value="P:embryonic pattern specification"/>
    <property type="evidence" value="ECO:0000270"/>
    <property type="project" value="UniProtKB"/>
</dbReference>
<dbReference type="GO" id="GO:0008544">
    <property type="term" value="P:epidermis development"/>
    <property type="evidence" value="ECO:0000304"/>
    <property type="project" value="FlyBase"/>
</dbReference>
<dbReference type="GO" id="GO:0007427">
    <property type="term" value="P:epithelial cell migration, open tracheal system"/>
    <property type="evidence" value="ECO:0000315"/>
    <property type="project" value="FlyBase"/>
</dbReference>
<dbReference type="GO" id="GO:0007440">
    <property type="term" value="P:foregut morphogenesis"/>
    <property type="evidence" value="ECO:0000304"/>
    <property type="project" value="FlyBase"/>
</dbReference>
<dbReference type="GO" id="GO:0035224">
    <property type="term" value="P:genital disc anterior/posterior pattern formation"/>
    <property type="evidence" value="ECO:0000270"/>
    <property type="project" value="FlyBase"/>
</dbReference>
<dbReference type="GO" id="GO:0035215">
    <property type="term" value="P:genital disc development"/>
    <property type="evidence" value="ECO:0000315"/>
    <property type="project" value="FlyBase"/>
</dbReference>
<dbReference type="GO" id="GO:0035232">
    <property type="term" value="P:germ cell attraction"/>
    <property type="evidence" value="ECO:0000304"/>
    <property type="project" value="FlyBase"/>
</dbReference>
<dbReference type="GO" id="GO:0008354">
    <property type="term" value="P:germ cell migration"/>
    <property type="evidence" value="ECO:0000315"/>
    <property type="project" value="FlyBase"/>
</dbReference>
<dbReference type="GO" id="GO:0008347">
    <property type="term" value="P:glial cell migration"/>
    <property type="evidence" value="ECO:0000315"/>
    <property type="project" value="FlyBase"/>
</dbReference>
<dbReference type="GO" id="GO:0007506">
    <property type="term" value="P:gonadal mesoderm development"/>
    <property type="evidence" value="ECO:0000315"/>
    <property type="project" value="FlyBase"/>
</dbReference>
<dbReference type="GO" id="GO:0007507">
    <property type="term" value="P:heart development"/>
    <property type="evidence" value="ECO:0000304"/>
    <property type="project" value="FlyBase"/>
</dbReference>
<dbReference type="GO" id="GO:0060914">
    <property type="term" value="P:heart formation"/>
    <property type="evidence" value="ECO:0000315"/>
    <property type="project" value="FlyBase"/>
</dbReference>
<dbReference type="GO" id="GO:0007442">
    <property type="term" value="P:hindgut morphogenesis"/>
    <property type="evidence" value="ECO:0000315"/>
    <property type="project" value="FlyBase"/>
</dbReference>
<dbReference type="GO" id="GO:0007446">
    <property type="term" value="P:imaginal disc growth"/>
    <property type="evidence" value="ECO:0000304"/>
    <property type="project" value="FlyBase"/>
</dbReference>
<dbReference type="GO" id="GO:0007476">
    <property type="term" value="P:imaginal disc-derived wing morphogenesis"/>
    <property type="evidence" value="ECO:0000315"/>
    <property type="project" value="FlyBase"/>
</dbReference>
<dbReference type="GO" id="GO:0016539">
    <property type="term" value="P:intein-mediated protein splicing"/>
    <property type="evidence" value="ECO:0007669"/>
    <property type="project" value="InterPro"/>
</dbReference>
<dbReference type="GO" id="GO:0035217">
    <property type="term" value="P:labial disc development"/>
    <property type="evidence" value="ECO:0000315"/>
    <property type="project" value="FlyBase"/>
</dbReference>
<dbReference type="GO" id="GO:0007478">
    <property type="term" value="P:leg disc morphogenesis"/>
    <property type="evidence" value="ECO:0000304"/>
    <property type="project" value="FlyBase"/>
</dbReference>
<dbReference type="GO" id="GO:0016335">
    <property type="term" value="P:morphogenesis of larval imaginal disc epithelium"/>
    <property type="evidence" value="ECO:0000315"/>
    <property type="project" value="FlyBase"/>
</dbReference>
<dbReference type="GO" id="GO:0002385">
    <property type="term" value="P:mucosal immune response"/>
    <property type="evidence" value="ECO:0000315"/>
    <property type="project" value="FlyBase"/>
</dbReference>
<dbReference type="GO" id="GO:0034111">
    <property type="term" value="P:negative regulation of homotypic cell-cell adhesion"/>
    <property type="evidence" value="ECO:0000314"/>
    <property type="project" value="FlyBase"/>
</dbReference>
<dbReference type="GO" id="GO:0045861">
    <property type="term" value="P:negative regulation of proteolysis"/>
    <property type="evidence" value="ECO:0000314"/>
    <property type="project" value="FlyBase"/>
</dbReference>
<dbReference type="GO" id="GO:0002052">
    <property type="term" value="P:positive regulation of neuroblast proliferation"/>
    <property type="evidence" value="ECO:0000315"/>
    <property type="project" value="FlyBase"/>
</dbReference>
<dbReference type="GO" id="GO:2000010">
    <property type="term" value="P:positive regulation of protein localization to cell surface"/>
    <property type="evidence" value="ECO:0000314"/>
    <property type="project" value="FlyBase"/>
</dbReference>
<dbReference type="GO" id="GO:0035289">
    <property type="term" value="P:posterior head segmentation"/>
    <property type="evidence" value="ECO:0000304"/>
    <property type="project" value="FlyBase"/>
</dbReference>
<dbReference type="GO" id="GO:0007458">
    <property type="term" value="P:progression of morphogenetic furrow involved in compound eye morphogenesis"/>
    <property type="evidence" value="ECO:0000315"/>
    <property type="project" value="FlyBase"/>
</dbReference>
<dbReference type="GO" id="GO:0016540">
    <property type="term" value="P:protein autoprocessing"/>
    <property type="evidence" value="ECO:0000314"/>
    <property type="project" value="UniProtKB"/>
</dbReference>
<dbReference type="GO" id="GO:2000495">
    <property type="term" value="P:regulation of cell proliferation involved in compound eye morphogenesis"/>
    <property type="evidence" value="ECO:0000315"/>
    <property type="project" value="FlyBase"/>
</dbReference>
<dbReference type="GO" id="GO:2000274">
    <property type="term" value="P:regulation of epithelial cell migration, open tracheal system"/>
    <property type="evidence" value="ECO:0000315"/>
    <property type="project" value="FlyBase"/>
</dbReference>
<dbReference type="GO" id="GO:0010468">
    <property type="term" value="P:regulation of gene expression"/>
    <property type="evidence" value="ECO:0000318"/>
    <property type="project" value="GO_Central"/>
</dbReference>
<dbReference type="GO" id="GO:0007346">
    <property type="term" value="P:regulation of mitotic cell cycle"/>
    <property type="evidence" value="ECO:0000315"/>
    <property type="project" value="FlyBase"/>
</dbReference>
<dbReference type="GO" id="GO:0007367">
    <property type="term" value="P:segment polarity determination"/>
    <property type="evidence" value="ECO:0000315"/>
    <property type="project" value="FlyBase"/>
</dbReference>
<dbReference type="GO" id="GO:0097264">
    <property type="term" value="P:self proteolysis"/>
    <property type="evidence" value="ECO:0000250"/>
    <property type="project" value="UniProtKB"/>
</dbReference>
<dbReference type="GO" id="GO:0007224">
    <property type="term" value="P:smoothened signaling pathway"/>
    <property type="evidence" value="ECO:0000314"/>
    <property type="project" value="FlyBase"/>
</dbReference>
<dbReference type="GO" id="GO:0035277">
    <property type="term" value="P:spiracle morphogenesis, open tracheal system"/>
    <property type="evidence" value="ECO:0000315"/>
    <property type="project" value="FlyBase"/>
</dbReference>
<dbReference type="GO" id="GO:0035154">
    <property type="term" value="P:terminal cell fate specification, open tracheal system"/>
    <property type="evidence" value="ECO:0000315"/>
    <property type="project" value="FlyBase"/>
</dbReference>
<dbReference type="GO" id="GO:0035290">
    <property type="term" value="P:trunk segmentation"/>
    <property type="evidence" value="ECO:0000304"/>
    <property type="project" value="FlyBase"/>
</dbReference>
<dbReference type="GO" id="GO:0007418">
    <property type="term" value="P:ventral midline development"/>
    <property type="evidence" value="ECO:0000315"/>
    <property type="project" value="FlyBase"/>
</dbReference>
<dbReference type="GO" id="GO:0048100">
    <property type="term" value="P:wing disc anterior/posterior pattern formation"/>
    <property type="evidence" value="ECO:0000304"/>
    <property type="project" value="FlyBase"/>
</dbReference>
<dbReference type="GO" id="GO:0035222">
    <property type="term" value="P:wing disc pattern formation"/>
    <property type="evidence" value="ECO:0000314"/>
    <property type="project" value="FlyBase"/>
</dbReference>
<dbReference type="GO" id="GO:0007473">
    <property type="term" value="P:wing disc proximal/distal pattern formation"/>
    <property type="evidence" value="ECO:0000304"/>
    <property type="project" value="FlyBase"/>
</dbReference>
<dbReference type="CDD" id="cd00081">
    <property type="entry name" value="Hint"/>
    <property type="match status" value="1"/>
</dbReference>
<dbReference type="FunFam" id="2.170.16.10:FF:000001">
    <property type="entry name" value="Indian hedgehog"/>
    <property type="match status" value="1"/>
</dbReference>
<dbReference type="FunFam" id="3.30.1380.10:FF:000001">
    <property type="entry name" value="Indian hedgehog"/>
    <property type="match status" value="1"/>
</dbReference>
<dbReference type="Gene3D" id="3.30.1380.10">
    <property type="match status" value="1"/>
</dbReference>
<dbReference type="Gene3D" id="2.170.16.10">
    <property type="entry name" value="Hedgehog/Intein (Hint) domain"/>
    <property type="match status" value="1"/>
</dbReference>
<dbReference type="InterPro" id="IPR001657">
    <property type="entry name" value="Hedgehog"/>
</dbReference>
<dbReference type="InterPro" id="IPR001767">
    <property type="entry name" value="Hedgehog_Hint"/>
</dbReference>
<dbReference type="InterPro" id="IPR009045">
    <property type="entry name" value="Hedgehog_sig/DD-Pept_Zn-bd_sf"/>
</dbReference>
<dbReference type="InterPro" id="IPR050387">
    <property type="entry name" value="Hedgehog_Signaling"/>
</dbReference>
<dbReference type="InterPro" id="IPR000320">
    <property type="entry name" value="Hedgehog_signalling_dom"/>
</dbReference>
<dbReference type="InterPro" id="IPR003586">
    <property type="entry name" value="Hint_dom_C"/>
</dbReference>
<dbReference type="InterPro" id="IPR003587">
    <property type="entry name" value="Hint_dom_N"/>
</dbReference>
<dbReference type="InterPro" id="IPR036844">
    <property type="entry name" value="Hint_dom_sf"/>
</dbReference>
<dbReference type="InterPro" id="IPR006141">
    <property type="entry name" value="Intein_N"/>
</dbReference>
<dbReference type="PANTHER" id="PTHR11889">
    <property type="entry name" value="HEDGEHOG"/>
    <property type="match status" value="1"/>
</dbReference>
<dbReference type="PANTHER" id="PTHR11889:SF31">
    <property type="entry name" value="PROTEIN HEDGEHOG"/>
    <property type="match status" value="1"/>
</dbReference>
<dbReference type="Pfam" id="PF01085">
    <property type="entry name" value="HH_signal"/>
    <property type="match status" value="1"/>
</dbReference>
<dbReference type="Pfam" id="PF01079">
    <property type="entry name" value="Hint"/>
    <property type="match status" value="1"/>
</dbReference>
<dbReference type="PIRSF" id="PIRSF009400">
    <property type="entry name" value="Peptidase_C46"/>
    <property type="match status" value="1"/>
</dbReference>
<dbReference type="PRINTS" id="PR00632">
    <property type="entry name" value="SONICHHOG"/>
</dbReference>
<dbReference type="SMART" id="SM00305">
    <property type="entry name" value="HintC"/>
    <property type="match status" value="1"/>
</dbReference>
<dbReference type="SMART" id="SM00306">
    <property type="entry name" value="HintN"/>
    <property type="match status" value="1"/>
</dbReference>
<dbReference type="SUPFAM" id="SSF55166">
    <property type="entry name" value="Hedgehog/DD-peptidase"/>
    <property type="match status" value="1"/>
</dbReference>
<dbReference type="SUPFAM" id="SSF51294">
    <property type="entry name" value="Hedgehog/intein (Hint) domain"/>
    <property type="match status" value="1"/>
</dbReference>
<dbReference type="PROSITE" id="PS50817">
    <property type="entry name" value="INTEIN_N_TER"/>
    <property type="match status" value="1"/>
</dbReference>
<comment type="function">
    <molecule>Protein hedgehog</molecule>
    <text evidence="2 6 15">The C-terminal part of the hedgehog protein precursor displays an autoproteolysis activity that results in the cleavage of the full-length protein into two parts (N-product and C-product) (PubMed:7885476). In addition, the C-terminal part displays a cholesterol transferase activity that results by the covalent attachment of a cholesterol moiety to the C-terminal of the newly generated N-product (By similarity). Once cleaved, the C-product has no signaling activity and diffuses from the cell (PubMed:12586063).</text>
</comment>
<comment type="function">
    <molecule>Protein hedgehog N-product</molecule>
    <text evidence="4 9 10 13 14 16">The dually lipidated hedgehog protein N-product is a morphogen which is essential for a variety of patterning events during development (PubMed:11319862, PubMed:1340474, PubMed:1394430, PubMed:25639794, PubMed:27195754, PubMed:8166882). Establishes the anterior-posterior axis of the embryonic segments and patterns the larval imaginal disks. Binds to the patched (ptc) receptor, which functions in association with smoothened (smo), to activate the transcription of target genes wingless (wg), decapentaplegic (dpp) and ptc. In the absence of hh, ptc represses the constitutive signaling activity of smo through fused (fu). Essential component of a signaling pathway which regulates the Duox-dependent gut immune response to bacterial uracil; required to activate Cad99C-dependent endosome formation, norpA-dependent Ca2+ mobilization and p38 MAPK, which are essential steps in the Duox-dependent production of reactive oxygen species (ROS) in response to intestinal bacterial infection (PubMed:25639794). During photoreceptor differentiation, it up-regulates transcription of Ubr3, which in turn promotes the hh-signaling pathway by mediating the ubiquitination and degradation of cos (PubMed:11319862, PubMed:1340474, PubMed:1394430, PubMed:25639794, PubMed:27195754, PubMed:8166882).</text>
</comment>
<comment type="catalytic activity">
    <molecule>Protein hedgehog</molecule>
    <reaction evidence="2">
        <text>glycyl-L-cysteinyl-[protein] + cholesterol + H(+) = [protein]-C-terminal glycyl cholesterol ester + N-terminal L-cysteinyl-[protein]</text>
        <dbReference type="Rhea" id="RHEA:59504"/>
        <dbReference type="Rhea" id="RHEA-COMP:12707"/>
        <dbReference type="Rhea" id="RHEA-COMP:15369"/>
        <dbReference type="Rhea" id="RHEA-COMP:15374"/>
        <dbReference type="ChEBI" id="CHEBI:15378"/>
        <dbReference type="ChEBI" id="CHEBI:16113"/>
        <dbReference type="ChEBI" id="CHEBI:65250"/>
        <dbReference type="ChEBI" id="CHEBI:143135"/>
        <dbReference type="ChEBI" id="CHEBI:143140"/>
    </reaction>
    <physiologicalReaction direction="left-to-right" evidence="2">
        <dbReference type="Rhea" id="RHEA:59505"/>
    </physiologicalReaction>
</comment>
<comment type="subunit">
    <text evidence="7 11">Interacts with shf (PubMed:15691765). Interacts with ptc and CG5504/l(2)tid (PubMed:12783860).</text>
</comment>
<comment type="interaction">
    <interactant intactId="EBI-15609026">
        <id>Q02936-1</id>
    </interactant>
    <interactant intactId="EBI-94134">
        <id>Q9VM64</id>
        <label>ihog</label>
    </interactant>
    <organismsDiffer>false</organismsDiffer>
    <experiments>6</experiments>
</comment>
<comment type="subcellular location">
    <subcellularLocation>
        <location evidence="8">Nucleus</location>
    </subcellularLocation>
    <subcellularLocation>
        <location evidence="8">Cytoplasm</location>
    </subcellularLocation>
    <text>Nuclear up to embryonic stage 10 and then at stage 11 shifts to the cytoplasm (PubMed:1280560). Also secreted in either cleaved or uncleaved form to mediate signaling to other cells (PubMed:1280560).</text>
</comment>
<comment type="subcellular location">
    <molecule>Protein hedgehog N-product</molecule>
    <subcellularLocation>
        <location evidence="6">Cell membrane</location>
        <topology evidence="6">Lipid-anchor</topology>
    </subcellularLocation>
    <text evidence="12">The N-terminal peptide remains associated with the cell surface (PubMed:12586063). Heparan sulfate proteoglycans of the extracellular matrix play an essential role in diffusion. Lipophorin is required for diffusion, probably by acting as vehicle for its movement, explaining how it can spread over long distances despite its lipidation (PubMed:15875013).</text>
</comment>
<comment type="alternative products">
    <event type="alternative splicing"/>
    <isoform>
        <id>Q02936-1</id>
        <name>Long</name>
        <name>A</name>
        <name>B</name>
        <sequence type="displayed"/>
    </isoform>
    <isoform>
        <id>Q02936-2</id>
        <name>Short</name>
        <sequence type="described" ref="VSP_002065 VSP_002066"/>
    </isoform>
</comment>
<comment type="tissue specificity">
    <text evidence="8 9 10 13 16">In embryos, expression starts at stage 5 as a few stripes at the anterior and posterior ends, this expands to 17 stripes during stages 8-11 (PubMed:1280560, PubMed:1340474, PubMed:8166882). Expression is also seen in CNS and some PNS cells until stage 13-14, and in foregut, hindgut and salivary glands (PubMed:1340474). In larvae, expression is seen in the posterior compartment of the wing, leg and antennal imaginal disks (PubMed:1340474, PubMed:1394430). In adults, high level of expression in specific regions of the proventriculus and hindgut, with slightly lower levels of expression in the posterior midgut (PubMed:25639794). Relatively low levels of expression in the anterior midgut region (PubMed:25639794).</text>
</comment>
<comment type="developmental stage">
    <text evidence="8 9 10 16">Expressed in embryos, larvae and pupae at high levels with maximum expression in 6-12 hours embryos and 0-24 hours pupae (PubMed:1280560, PubMed:1340474, PubMed:1394430, PubMed:8166882). Low levels of expression are seen in adults (PubMed:1394430, PubMed:8166882).</text>
</comment>
<comment type="induction">
    <text evidence="13">Strongly up-regulated in the anterior midgut and the posterior midgut in response to bacterial uracil.</text>
</comment>
<comment type="PTM">
    <molecule>Protein hedgehog</molecule>
    <text evidence="1 2 15">The C-terminal part of the hedgehog protein precursor displays an autoproteolysis activity that results in the cleavage of the full-length protein into two parts (N-product and C-product) (PubMed:7885476). In addition, the C-terminal part displays a cholesterol transferase activity that results by the covalent attachment of a cholesterol moiety to the C-terminal of the newly generated N-product (By similarity). The N-product is the active species in both local and long-range signaling, whereas the C-product has no signaling activity (By similarity).</text>
</comment>
<comment type="PTM">
    <molecule>Protein hedgehog N-product</molecule>
    <text evidence="2">Cholesterylation is required for N-product targeting to lipid rafts and multimerization.</text>
</comment>
<comment type="PTM">
    <molecule>Protein hedgehog N-product</molecule>
    <text evidence="5">N-palmitoylation by Rasp of the hedgehog N-product, within the secretory pathway, is required for the embryonic and larval patterning activities of the hedgehog signal.</text>
</comment>
<comment type="mass spectrometry">
    <molecule>Protein hedgehog N-product</molecule>
</comment>
<comment type="disruption phenotype">
    <text evidence="13">RNAi-mediated knockdown severely reduces adult survival following the ingestion of E.carotovora. Abolishes Cad99C-dependent formation of endosomes and DUOX-dependent up-regulation of reactive oxygen species (ROS) in the intestines of adults fed bacteria-derived uracil.</text>
</comment>
<comment type="similarity">
    <text evidence="18">Belongs to the hedgehog family.</text>
</comment>
<comment type="sequence caution" evidence="18">
    <conflict type="frameshift">
        <sequence resource="EMBL-CDS" id="AAA28604"/>
    </conflict>
</comment>
<keyword id="KW-0002">3D-structure</keyword>
<keyword id="KW-0025">Alternative splicing</keyword>
<keyword id="KW-0068">Autocatalytic cleavage</keyword>
<keyword id="KW-0106">Calcium</keyword>
<keyword id="KW-1003">Cell membrane</keyword>
<keyword id="KW-0963">Cytoplasm</keyword>
<keyword id="KW-0217">Developmental protein</keyword>
<keyword id="KW-0378">Hydrolase</keyword>
<keyword id="KW-0449">Lipoprotein</keyword>
<keyword id="KW-0472">Membrane</keyword>
<keyword id="KW-0479">Metal-binding</keyword>
<keyword id="KW-0504">Morphogen</keyword>
<keyword id="KW-0539">Nucleus</keyword>
<keyword id="KW-0564">Palmitate</keyword>
<keyword id="KW-0645">Protease</keyword>
<keyword id="KW-1185">Reference proteome</keyword>
<keyword id="KW-0709">Segmentation polarity protein</keyword>
<keyword id="KW-0732">Signal</keyword>
<keyword id="KW-0808">Transferase</keyword>
<reference key="1">
    <citation type="journal article" date="1993" name="Gene">
        <title>Structure and expression of hedgehog, a Drosophila segment-polarity gene required for cell-cell communication.</title>
        <authorList>
            <person name="Tashiro S."/>
            <person name="Michiue T."/>
            <person name="Higashijima S."/>
            <person name="Zenno S."/>
            <person name="Ishimaru S."/>
            <person name="Takahashi F."/>
            <person name="Orihara M."/>
            <person name="Kojima T."/>
            <person name="Saigo K."/>
        </authorList>
    </citation>
    <scope>NUCLEOTIDE SEQUENCE [GENOMIC DNA / MRNA] (ISOFORM LONG)</scope>
    <scope>FUNCTION</scope>
    <scope>DEVELOPMENTAL STAGE</scope>
    <scope>TISSUE SPECIFICITY</scope>
    <source>
        <strain>Canton-S</strain>
        <tissue>Embryo</tissue>
    </source>
</reference>
<reference key="2">
    <citation type="journal article" date="1992" name="Cell">
        <title>Secretion and localized transcription suggest a role in positional signaling for products of the segmentation gene hedgehog.</title>
        <authorList>
            <person name="Lee J.J."/>
            <person name="von Kessler D.P."/>
            <person name="Parks S."/>
            <person name="Beachy P.A."/>
        </authorList>
    </citation>
    <scope>NUCLEOTIDE SEQUENCE [GENOMIC DNA]</scope>
    <scope>FUNCTION</scope>
    <scope>DEVELOPMENTAL STAGE</scope>
    <scope>TISSUE SPECIFICITY</scope>
</reference>
<reference key="3">
    <citation type="journal article" date="1992" name="Development">
        <title>Molecular organization and embryonic expression of the hedgehog gene involved in cell-cell communication in segmental patterning of Drosophila.</title>
        <authorList>
            <person name="Mohler J."/>
            <person name="Vani K."/>
        </authorList>
    </citation>
    <scope>NUCLEOTIDE SEQUENCE [GENOMIC DNA]</scope>
    <scope>ALTERNATIVE SPLICING</scope>
    <scope>SUBCELLULAR LOCATION</scope>
    <scope>DEVELOPMENTAL STAGE</scope>
    <scope>TISSUE SPECIFICITY</scope>
    <source>
        <strain>Oregon-R</strain>
        <tissue>Embryo</tissue>
    </source>
</reference>
<reference key="4">
    <citation type="journal article" date="1992" name="Genes Dev.">
        <title>The Drosophila hedgehog gene is expressed specifically in posterior compartment cells and is a target of engrailed regulation.</title>
        <authorList>
            <person name="Tabata T."/>
            <person name="Eaton S."/>
            <person name="Kornberg T.B."/>
        </authorList>
    </citation>
    <scope>NUCLEOTIDE SEQUENCE [MRNA] (ISOFORM LONG)</scope>
    <scope>FUNCTION</scope>
    <scope>DEVELOPMENTAL STAGE</scope>
    <scope>TISSUE SPECIFICITY</scope>
    <source>
        <strain>Oregon-R</strain>
        <tissue>Embryo</tissue>
    </source>
</reference>
<reference key="5">
    <citation type="journal article" date="2000" name="Science">
        <title>The genome sequence of Drosophila melanogaster.</title>
        <authorList>
            <person name="Adams M.D."/>
            <person name="Celniker S.E."/>
            <person name="Holt R.A."/>
            <person name="Evans C.A."/>
            <person name="Gocayne J.D."/>
            <person name="Amanatides P.G."/>
            <person name="Scherer S.E."/>
            <person name="Li P.W."/>
            <person name="Hoskins R.A."/>
            <person name="Galle R.F."/>
            <person name="George R.A."/>
            <person name="Lewis S.E."/>
            <person name="Richards S."/>
            <person name="Ashburner M."/>
            <person name="Henderson S.N."/>
            <person name="Sutton G.G."/>
            <person name="Wortman J.R."/>
            <person name="Yandell M.D."/>
            <person name="Zhang Q."/>
            <person name="Chen L.X."/>
            <person name="Brandon R.C."/>
            <person name="Rogers Y.-H.C."/>
            <person name="Blazej R.G."/>
            <person name="Champe M."/>
            <person name="Pfeiffer B.D."/>
            <person name="Wan K.H."/>
            <person name="Doyle C."/>
            <person name="Baxter E.G."/>
            <person name="Helt G."/>
            <person name="Nelson C.R."/>
            <person name="Miklos G.L.G."/>
            <person name="Abril J.F."/>
            <person name="Agbayani A."/>
            <person name="An H.-J."/>
            <person name="Andrews-Pfannkoch C."/>
            <person name="Baldwin D."/>
            <person name="Ballew R.M."/>
            <person name="Basu A."/>
            <person name="Baxendale J."/>
            <person name="Bayraktaroglu L."/>
            <person name="Beasley E.M."/>
            <person name="Beeson K.Y."/>
            <person name="Benos P.V."/>
            <person name="Berman B.P."/>
            <person name="Bhandari D."/>
            <person name="Bolshakov S."/>
            <person name="Borkova D."/>
            <person name="Botchan M.R."/>
            <person name="Bouck J."/>
            <person name="Brokstein P."/>
            <person name="Brottier P."/>
            <person name="Burtis K.C."/>
            <person name="Busam D.A."/>
            <person name="Butler H."/>
            <person name="Cadieu E."/>
            <person name="Center A."/>
            <person name="Chandra I."/>
            <person name="Cherry J.M."/>
            <person name="Cawley S."/>
            <person name="Dahlke C."/>
            <person name="Davenport L.B."/>
            <person name="Davies P."/>
            <person name="de Pablos B."/>
            <person name="Delcher A."/>
            <person name="Deng Z."/>
            <person name="Mays A.D."/>
            <person name="Dew I."/>
            <person name="Dietz S.M."/>
            <person name="Dodson K."/>
            <person name="Doup L.E."/>
            <person name="Downes M."/>
            <person name="Dugan-Rocha S."/>
            <person name="Dunkov B.C."/>
            <person name="Dunn P."/>
            <person name="Durbin K.J."/>
            <person name="Evangelista C.C."/>
            <person name="Ferraz C."/>
            <person name="Ferriera S."/>
            <person name="Fleischmann W."/>
            <person name="Fosler C."/>
            <person name="Gabrielian A.E."/>
            <person name="Garg N.S."/>
            <person name="Gelbart W.M."/>
            <person name="Glasser K."/>
            <person name="Glodek A."/>
            <person name="Gong F."/>
            <person name="Gorrell J.H."/>
            <person name="Gu Z."/>
            <person name="Guan P."/>
            <person name="Harris M."/>
            <person name="Harris N.L."/>
            <person name="Harvey D.A."/>
            <person name="Heiman T.J."/>
            <person name="Hernandez J.R."/>
            <person name="Houck J."/>
            <person name="Hostin D."/>
            <person name="Houston K.A."/>
            <person name="Howland T.J."/>
            <person name="Wei M.-H."/>
            <person name="Ibegwam C."/>
            <person name="Jalali M."/>
            <person name="Kalush F."/>
            <person name="Karpen G.H."/>
            <person name="Ke Z."/>
            <person name="Kennison J.A."/>
            <person name="Ketchum K.A."/>
            <person name="Kimmel B.E."/>
            <person name="Kodira C.D."/>
            <person name="Kraft C.L."/>
            <person name="Kravitz S."/>
            <person name="Kulp D."/>
            <person name="Lai Z."/>
            <person name="Lasko P."/>
            <person name="Lei Y."/>
            <person name="Levitsky A.A."/>
            <person name="Li J.H."/>
            <person name="Li Z."/>
            <person name="Liang Y."/>
            <person name="Lin X."/>
            <person name="Liu X."/>
            <person name="Mattei B."/>
            <person name="McIntosh T.C."/>
            <person name="McLeod M.P."/>
            <person name="McPherson D."/>
            <person name="Merkulov G."/>
            <person name="Milshina N.V."/>
            <person name="Mobarry C."/>
            <person name="Morris J."/>
            <person name="Moshrefi A."/>
            <person name="Mount S.M."/>
            <person name="Moy M."/>
            <person name="Murphy B."/>
            <person name="Murphy L."/>
            <person name="Muzny D.M."/>
            <person name="Nelson D.L."/>
            <person name="Nelson D.R."/>
            <person name="Nelson K.A."/>
            <person name="Nixon K."/>
            <person name="Nusskern D.R."/>
            <person name="Pacleb J.M."/>
            <person name="Palazzolo M."/>
            <person name="Pittman G.S."/>
            <person name="Pan S."/>
            <person name="Pollard J."/>
            <person name="Puri V."/>
            <person name="Reese M.G."/>
            <person name="Reinert K."/>
            <person name="Remington K."/>
            <person name="Saunders R.D.C."/>
            <person name="Scheeler F."/>
            <person name="Shen H."/>
            <person name="Shue B.C."/>
            <person name="Siden-Kiamos I."/>
            <person name="Simpson M."/>
            <person name="Skupski M.P."/>
            <person name="Smith T.J."/>
            <person name="Spier E."/>
            <person name="Spradling A.C."/>
            <person name="Stapleton M."/>
            <person name="Strong R."/>
            <person name="Sun E."/>
            <person name="Svirskas R."/>
            <person name="Tector C."/>
            <person name="Turner R."/>
            <person name="Venter E."/>
            <person name="Wang A.H."/>
            <person name="Wang X."/>
            <person name="Wang Z.-Y."/>
            <person name="Wassarman D.A."/>
            <person name="Weinstock G.M."/>
            <person name="Weissenbach J."/>
            <person name="Williams S.M."/>
            <person name="Woodage T."/>
            <person name="Worley K.C."/>
            <person name="Wu D."/>
            <person name="Yang S."/>
            <person name="Yao Q.A."/>
            <person name="Ye J."/>
            <person name="Yeh R.-F."/>
            <person name="Zaveri J.S."/>
            <person name="Zhan M."/>
            <person name="Zhang G."/>
            <person name="Zhao Q."/>
            <person name="Zheng L."/>
            <person name="Zheng X.H."/>
            <person name="Zhong F.N."/>
            <person name="Zhong W."/>
            <person name="Zhou X."/>
            <person name="Zhu S.C."/>
            <person name="Zhu X."/>
            <person name="Smith H.O."/>
            <person name="Gibbs R.A."/>
            <person name="Myers E.W."/>
            <person name="Rubin G.M."/>
            <person name="Venter J.C."/>
        </authorList>
    </citation>
    <scope>NUCLEOTIDE SEQUENCE [LARGE SCALE GENOMIC DNA]</scope>
    <source>
        <strain>Berkeley</strain>
    </source>
</reference>
<reference key="6">
    <citation type="journal article" date="2002" name="Genome Biol.">
        <title>Annotation of the Drosophila melanogaster euchromatic genome: a systematic review.</title>
        <authorList>
            <person name="Misra S."/>
            <person name="Crosby M.A."/>
            <person name="Mungall C.J."/>
            <person name="Matthews B.B."/>
            <person name="Campbell K.S."/>
            <person name="Hradecky P."/>
            <person name="Huang Y."/>
            <person name="Kaminker J.S."/>
            <person name="Millburn G.H."/>
            <person name="Prochnik S.E."/>
            <person name="Smith C.D."/>
            <person name="Tupy J.L."/>
            <person name="Whitfield E.J."/>
            <person name="Bayraktaroglu L."/>
            <person name="Berman B.P."/>
            <person name="Bettencourt B.R."/>
            <person name="Celniker S.E."/>
            <person name="de Grey A.D.N.J."/>
            <person name="Drysdale R.A."/>
            <person name="Harris N.L."/>
            <person name="Richter J."/>
            <person name="Russo S."/>
            <person name="Schroeder A.J."/>
            <person name="Shu S.Q."/>
            <person name="Stapleton M."/>
            <person name="Yamada C."/>
            <person name="Ashburner M."/>
            <person name="Gelbart W.M."/>
            <person name="Rubin G.M."/>
            <person name="Lewis S.E."/>
        </authorList>
    </citation>
    <scope>GENOME REANNOTATION</scope>
    <source>
        <strain>Berkeley</strain>
    </source>
</reference>
<reference key="7">
    <citation type="journal article" date="1995" name="Nature">
        <title>The product of hedgehog autoproteolytic cleavage active in local and long-range signalling.</title>
        <authorList>
            <person name="Porter J.A."/>
            <person name="von Kessler D.P."/>
            <person name="Ekker S.C."/>
            <person name="Young K.E."/>
            <person name="Lee J.J."/>
            <person name="Moses K."/>
            <person name="Beachy P.A."/>
        </authorList>
    </citation>
    <scope>AUTOCATALYTIC CLEAVAGE</scope>
    <scope>PROTEOLYTIC PROCESSING</scope>
</reference>
<reference key="8">
    <citation type="journal article" date="2001" name="Dev. Biol.">
        <title>An acylatable residue of Hedgehog is differentially required in Drosophila and mouse limb development.</title>
        <authorList>
            <person name="Lee J.D."/>
            <person name="Kraus P."/>
            <person name="Gaiano N."/>
            <person name="Nery S."/>
            <person name="Kohtz J."/>
            <person name="Fishell G."/>
            <person name="Loomis C.A."/>
            <person name="Treisman J.E."/>
        </authorList>
    </citation>
    <scope>FUNCTION</scope>
    <scope>MUTAGENESIS OF CYS-85</scope>
</reference>
<reference key="9">
    <citation type="journal article" date="2001" name="Science">
        <title>Skinny hedgehog, an acyltransferase required for palmitoylation and activity of the hedgehog signal.</title>
        <authorList>
            <person name="Chamoun Z."/>
            <person name="Mann R.K."/>
            <person name="Nellen D."/>
            <person name="von Kessler D.P."/>
            <person name="Bellotto M."/>
            <person name="Beachy P.A."/>
            <person name="Basler K."/>
        </authorList>
    </citation>
    <scope>PALMITOYLATION AT CYS-85</scope>
    <scope>CHOLESTERYLATION AT GLY-257</scope>
    <scope>MUTAGENESIS OF CYS-85</scope>
    <scope>MASS SPECTROMETRY</scope>
</reference>
<reference key="10">
    <citation type="journal article" date="2003" name="Dev. Cell">
        <title>Cholesterol modification of hedgehog is required for trafficking and movement, revealing an asymmetric cellular response to hedgehog.</title>
        <authorList>
            <person name="Gallet A."/>
            <person name="Rodriguez R."/>
            <person name="Ruel L."/>
            <person name="Therond P.P."/>
        </authorList>
    </citation>
    <scope>ROLE OF CHOLESTEROL</scope>
    <scope>SUBCELLULAR LOCATION</scope>
</reference>
<reference key="11">
    <citation type="journal article" date="2003" name="J. Biol. Chem.">
        <title>Understanding human cancer using Drosophila: Tid47, a cytosolic product of the DnaJ-like tumor suppressor gene l2Tid, is a novel molecular partner of patched related to skin cancer.</title>
        <authorList>
            <person name="Canamasas I."/>
            <person name="Debes A."/>
            <person name="Natali P.G."/>
            <person name="Kurzik-Dumke U."/>
        </authorList>
    </citation>
    <scope>INTERACTION WITH PTC AND CG5504</scope>
</reference>
<reference key="12">
    <citation type="journal article" date="2005" name="Dev. Cell">
        <title>The Drosophila ortholog of the human wnt inhibitor factor shifted controls the diffusion of lipid-modified hedgehog.</title>
        <authorList>
            <person name="Gorfinkiel N."/>
            <person name="Sierra J."/>
            <person name="Callejo A."/>
            <person name="Ibanez C."/>
            <person name="Guerrero I."/>
        </authorList>
    </citation>
    <scope>INTERACTION WITH SHF</scope>
</reference>
<reference key="13">
    <citation type="journal article" date="2005" name="Nature">
        <title>Lipoprotein particles are required for Hedgehog and Wingless signalling.</title>
        <authorList>
            <person name="Panakova D."/>
            <person name="Sprong H."/>
            <person name="Marois E."/>
            <person name="Thiele C."/>
            <person name="Eaton S."/>
        </authorList>
    </citation>
    <scope>ROLE OF LIPOPHORIN IN MOVEMENT</scope>
</reference>
<reference key="14">
    <citation type="journal article" date="2015" name="Cell Host Microbe">
        <title>Bacterial uracil modulates Drosophila DUOX-dependent gut immunity via Hedgehog-induced signaling endosomes.</title>
        <authorList>
            <person name="Lee K.A."/>
            <person name="Kim B."/>
            <person name="Bhin J."/>
            <person name="Kim D.H."/>
            <person name="You H."/>
            <person name="Kim E.K."/>
            <person name="Kim S.H."/>
            <person name="Ryu J.H."/>
            <person name="Hwang D."/>
            <person name="Lee W.J."/>
        </authorList>
    </citation>
    <scope>FUNCTION</scope>
    <scope>TISSUE SPECIFICITY</scope>
    <scope>INDUCTION BY BACTERIAL URACIL</scope>
    <scope>DISRUPTION PHENOTYPE</scope>
</reference>
<reference key="15">
    <citation type="journal article" date="2016" name="PLoS Genet.">
        <title>Ubr3, a Novel Modulator of Hh Signaling Affects the Degradation of Costal-2 and Kif7 through Poly-ubiquitination.</title>
        <authorList>
            <person name="Li T."/>
            <person name="Fan J."/>
            <person name="Blanco-Sanchez B."/>
            <person name="Giagtzoglou N."/>
            <person name="Lin G."/>
            <person name="Yamamoto S."/>
            <person name="Jaiswal M."/>
            <person name="Chen K."/>
            <person name="Zhang J."/>
            <person name="Wei W."/>
            <person name="Lewis M.T."/>
            <person name="Groves A.K."/>
            <person name="Westerfield M."/>
            <person name="Jia J."/>
            <person name="Bellen H.J."/>
        </authorList>
    </citation>
    <scope>FUNCTION</scope>
</reference>
<reference key="16">
    <citation type="journal article" date="1997" name="Cell">
        <title>Crystal structure of a Hedgehog autoprocessing domain: homology between Hedgehog and self-splicing proteins.</title>
        <authorList>
            <person name="Hall T.M.T."/>
            <person name="Porter J.A."/>
            <person name="Young K.E."/>
            <person name="Koonin E.V."/>
            <person name="Beachy P.A."/>
            <person name="Leahy D.J."/>
        </authorList>
    </citation>
    <scope>X-RAY CRYSTALLOGRAPHY (1.9 ANGSTROMS) OF 258-402</scope>
    <scope>MUTAGENESIS OF ASP-303; THR-326 AND HIS-329</scope>
</reference>